<organism>
    <name type="scientific">Salmonella schwarzengrund (strain CVM19633)</name>
    <dbReference type="NCBI Taxonomy" id="439843"/>
    <lineage>
        <taxon>Bacteria</taxon>
        <taxon>Pseudomonadati</taxon>
        <taxon>Pseudomonadota</taxon>
        <taxon>Gammaproteobacteria</taxon>
        <taxon>Enterobacterales</taxon>
        <taxon>Enterobacteriaceae</taxon>
        <taxon>Salmonella</taxon>
    </lineage>
</organism>
<evidence type="ECO:0000255" key="1">
    <source>
        <dbReference type="HAMAP-Rule" id="MF_00143"/>
    </source>
</evidence>
<name>YQHA_SALSV</name>
<gene>
    <name evidence="1" type="primary">yqhA</name>
    <name type="ordered locus">SeSA_A3336</name>
</gene>
<reference key="1">
    <citation type="journal article" date="2011" name="J. Bacteriol.">
        <title>Comparative genomics of 28 Salmonella enterica isolates: evidence for CRISPR-mediated adaptive sublineage evolution.</title>
        <authorList>
            <person name="Fricke W.F."/>
            <person name="Mammel M.K."/>
            <person name="McDermott P.F."/>
            <person name="Tartera C."/>
            <person name="White D.G."/>
            <person name="Leclerc J.E."/>
            <person name="Ravel J."/>
            <person name="Cebula T.A."/>
        </authorList>
    </citation>
    <scope>NUCLEOTIDE SEQUENCE [LARGE SCALE GENOMIC DNA]</scope>
    <source>
        <strain>CVM19633</strain>
    </source>
</reference>
<accession>B4TVN6</accession>
<sequence>MERFLENVMYASRWLLAPVYFGLSLALIALALKFFQEILHVLPNVFALAEADLILVLLSLVDMTLVGGLLVMVMFSGYENFVSQLDISAGKEKLNWLGKMDATSLKNKVAASIVAISSIHLLRVFMDAKNVPDNKLMWYVIIHLTFVLSAFVMGYLDRLTRHNH</sequence>
<keyword id="KW-1003">Cell membrane</keyword>
<keyword id="KW-0472">Membrane</keyword>
<keyword id="KW-0812">Transmembrane</keyword>
<keyword id="KW-1133">Transmembrane helix</keyword>
<feature type="chain" id="PRO_1000096280" description="UPF0114 protein YqhA">
    <location>
        <begin position="1"/>
        <end position="164"/>
    </location>
</feature>
<feature type="transmembrane region" description="Helical" evidence="1">
    <location>
        <begin position="15"/>
        <end position="35"/>
    </location>
</feature>
<feature type="transmembrane region" description="Helical" evidence="1">
    <location>
        <begin position="53"/>
        <end position="73"/>
    </location>
</feature>
<feature type="transmembrane region" description="Helical" evidence="1">
    <location>
        <begin position="136"/>
        <end position="156"/>
    </location>
</feature>
<protein>
    <recommendedName>
        <fullName evidence="1">UPF0114 protein YqhA</fullName>
    </recommendedName>
</protein>
<proteinExistence type="inferred from homology"/>
<comment type="subcellular location">
    <subcellularLocation>
        <location evidence="1">Cell membrane</location>
        <topology evidence="1">Multi-pass membrane protein</topology>
    </subcellularLocation>
</comment>
<comment type="similarity">
    <text evidence="1">Belongs to the UPF0114 family.</text>
</comment>
<dbReference type="EMBL" id="CP001127">
    <property type="protein sequence ID" value="ACF92135.1"/>
    <property type="molecule type" value="Genomic_DNA"/>
</dbReference>
<dbReference type="RefSeq" id="WP_000439335.1">
    <property type="nucleotide sequence ID" value="NC_011094.1"/>
</dbReference>
<dbReference type="KEGG" id="sew:SeSA_A3336"/>
<dbReference type="HOGENOM" id="CLU_097887_1_1_6"/>
<dbReference type="Proteomes" id="UP000001865">
    <property type="component" value="Chromosome"/>
</dbReference>
<dbReference type="GO" id="GO:0005886">
    <property type="term" value="C:plasma membrane"/>
    <property type="evidence" value="ECO:0007669"/>
    <property type="project" value="UniProtKB-SubCell"/>
</dbReference>
<dbReference type="HAMAP" id="MF_00143">
    <property type="entry name" value="UPF0114"/>
    <property type="match status" value="1"/>
</dbReference>
<dbReference type="InterPro" id="IPR005134">
    <property type="entry name" value="UPF0114"/>
</dbReference>
<dbReference type="InterPro" id="IPR020761">
    <property type="entry name" value="UPF0114_bac"/>
</dbReference>
<dbReference type="NCBIfam" id="TIGR00645">
    <property type="entry name" value="HI0507"/>
    <property type="match status" value="1"/>
</dbReference>
<dbReference type="PANTHER" id="PTHR38596">
    <property type="entry name" value="UPF0114 PROTEIN YQHA"/>
    <property type="match status" value="1"/>
</dbReference>
<dbReference type="PANTHER" id="PTHR38596:SF1">
    <property type="entry name" value="UPF0114 PROTEIN YQHA"/>
    <property type="match status" value="1"/>
</dbReference>
<dbReference type="Pfam" id="PF03350">
    <property type="entry name" value="UPF0114"/>
    <property type="match status" value="1"/>
</dbReference>